<proteinExistence type="evidence at protein level"/>
<reference key="1">
    <citation type="journal article" date="1997" name="Nature">
        <title>The nucleotide sequence of Saccharomyces cerevisiae chromosome IV.</title>
        <authorList>
            <person name="Jacq C."/>
            <person name="Alt-Moerbe J."/>
            <person name="Andre B."/>
            <person name="Arnold W."/>
            <person name="Bahr A."/>
            <person name="Ballesta J.P.G."/>
            <person name="Bargues M."/>
            <person name="Baron L."/>
            <person name="Becker A."/>
            <person name="Biteau N."/>
            <person name="Bloecker H."/>
            <person name="Blugeon C."/>
            <person name="Boskovic J."/>
            <person name="Brandt P."/>
            <person name="Brueckner M."/>
            <person name="Buitrago M.J."/>
            <person name="Coster F."/>
            <person name="Delaveau T."/>
            <person name="del Rey F."/>
            <person name="Dujon B."/>
            <person name="Eide L.G."/>
            <person name="Garcia-Cantalejo J.M."/>
            <person name="Goffeau A."/>
            <person name="Gomez-Peris A."/>
            <person name="Granotier C."/>
            <person name="Hanemann V."/>
            <person name="Hankeln T."/>
            <person name="Hoheisel J.D."/>
            <person name="Jaeger W."/>
            <person name="Jimenez A."/>
            <person name="Jonniaux J.-L."/>
            <person name="Kraemer C."/>
            <person name="Kuester H."/>
            <person name="Laamanen P."/>
            <person name="Legros Y."/>
            <person name="Louis E.J."/>
            <person name="Moeller-Rieker S."/>
            <person name="Monnet A."/>
            <person name="Moro M."/>
            <person name="Mueller-Auer S."/>
            <person name="Nussbaumer B."/>
            <person name="Paricio N."/>
            <person name="Paulin L."/>
            <person name="Perea J."/>
            <person name="Perez-Alonso M."/>
            <person name="Perez-Ortin J.E."/>
            <person name="Pohl T.M."/>
            <person name="Prydz H."/>
            <person name="Purnelle B."/>
            <person name="Rasmussen S.W."/>
            <person name="Remacha M.A."/>
            <person name="Revuelta J.L."/>
            <person name="Rieger M."/>
            <person name="Salom D."/>
            <person name="Saluz H.P."/>
            <person name="Saiz J.E."/>
            <person name="Saren A.-M."/>
            <person name="Schaefer M."/>
            <person name="Scharfe M."/>
            <person name="Schmidt E.R."/>
            <person name="Schneider C."/>
            <person name="Scholler P."/>
            <person name="Schwarz S."/>
            <person name="Soler-Mira A."/>
            <person name="Urrestarazu L.A."/>
            <person name="Verhasselt P."/>
            <person name="Vissers S."/>
            <person name="Voet M."/>
            <person name="Volckaert G."/>
            <person name="Wagner G."/>
            <person name="Wambutt R."/>
            <person name="Wedler E."/>
            <person name="Wedler H."/>
            <person name="Woelfl S."/>
            <person name="Harris D.E."/>
            <person name="Bowman S."/>
            <person name="Brown D."/>
            <person name="Churcher C.M."/>
            <person name="Connor R."/>
            <person name="Dedman K."/>
            <person name="Gentles S."/>
            <person name="Hamlin N."/>
            <person name="Hunt S."/>
            <person name="Jones L."/>
            <person name="McDonald S."/>
            <person name="Murphy L.D."/>
            <person name="Niblett D."/>
            <person name="Odell C."/>
            <person name="Oliver K."/>
            <person name="Rajandream M.A."/>
            <person name="Richards C."/>
            <person name="Shore L."/>
            <person name="Walsh S.V."/>
            <person name="Barrell B.G."/>
            <person name="Dietrich F.S."/>
            <person name="Mulligan J.T."/>
            <person name="Allen E."/>
            <person name="Araujo R."/>
            <person name="Aviles E."/>
            <person name="Berno A."/>
            <person name="Carpenter J."/>
            <person name="Chen E."/>
            <person name="Cherry J.M."/>
            <person name="Chung E."/>
            <person name="Duncan M."/>
            <person name="Hunicke-Smith S."/>
            <person name="Hyman R.W."/>
            <person name="Komp C."/>
            <person name="Lashkari D."/>
            <person name="Lew H."/>
            <person name="Lin D."/>
            <person name="Mosedale D."/>
            <person name="Nakahara K."/>
            <person name="Namath A."/>
            <person name="Oefner P."/>
            <person name="Oh C."/>
            <person name="Petel F.X."/>
            <person name="Roberts D."/>
            <person name="Schramm S."/>
            <person name="Schroeder M."/>
            <person name="Shogren T."/>
            <person name="Shroff N."/>
            <person name="Winant A."/>
            <person name="Yelton M.A."/>
            <person name="Botstein D."/>
            <person name="Davis R.W."/>
            <person name="Johnston M."/>
            <person name="Andrews S."/>
            <person name="Brinkman R."/>
            <person name="Cooper J."/>
            <person name="Ding H."/>
            <person name="Du Z."/>
            <person name="Favello A."/>
            <person name="Fulton L."/>
            <person name="Gattung S."/>
            <person name="Greco T."/>
            <person name="Hallsworth K."/>
            <person name="Hawkins J."/>
            <person name="Hillier L.W."/>
            <person name="Jier M."/>
            <person name="Johnson D."/>
            <person name="Johnston L."/>
            <person name="Kirsten J."/>
            <person name="Kucaba T."/>
            <person name="Langston Y."/>
            <person name="Latreille P."/>
            <person name="Le T."/>
            <person name="Mardis E."/>
            <person name="Menezes S."/>
            <person name="Miller N."/>
            <person name="Nhan M."/>
            <person name="Pauley A."/>
            <person name="Peluso D."/>
            <person name="Rifkin L."/>
            <person name="Riles L."/>
            <person name="Taich A."/>
            <person name="Trevaskis E."/>
            <person name="Vignati D."/>
            <person name="Wilcox L."/>
            <person name="Wohldman P."/>
            <person name="Vaudin M."/>
            <person name="Wilson R."/>
            <person name="Waterston R."/>
            <person name="Albermann K."/>
            <person name="Hani J."/>
            <person name="Heumann K."/>
            <person name="Kleine K."/>
            <person name="Mewes H.-W."/>
            <person name="Zollner A."/>
            <person name="Zaccaria P."/>
        </authorList>
    </citation>
    <scope>NUCLEOTIDE SEQUENCE [LARGE SCALE GENOMIC DNA]</scope>
    <source>
        <strain>ATCC 204508 / S288c</strain>
    </source>
</reference>
<reference key="2">
    <citation type="journal article" date="2014" name="G3 (Bethesda)">
        <title>The reference genome sequence of Saccharomyces cerevisiae: Then and now.</title>
        <authorList>
            <person name="Engel S.R."/>
            <person name="Dietrich F.S."/>
            <person name="Fisk D.G."/>
            <person name="Binkley G."/>
            <person name="Balakrishnan R."/>
            <person name="Costanzo M.C."/>
            <person name="Dwight S.S."/>
            <person name="Hitz B.C."/>
            <person name="Karra K."/>
            <person name="Nash R.S."/>
            <person name="Weng S."/>
            <person name="Wong E.D."/>
            <person name="Lloyd P."/>
            <person name="Skrzypek M.S."/>
            <person name="Miyasato S.R."/>
            <person name="Simison M."/>
            <person name="Cherry J.M."/>
        </authorList>
    </citation>
    <scope>GENOME REANNOTATION</scope>
    <source>
        <strain>ATCC 204508 / S288c</strain>
    </source>
</reference>
<reference key="3">
    <citation type="journal article" date="2001" name="Nature">
        <title>Genomic binding sites of the yeast cell-cycle transcription factors SBF and MBF.</title>
        <authorList>
            <person name="Iyer V.R."/>
            <person name="Horak C.E."/>
            <person name="Scafe C.S."/>
            <person name="Botstein D."/>
            <person name="Snyder M."/>
            <person name="Brown P.O."/>
        </authorList>
    </citation>
    <scope>INDUCTION</scope>
</reference>
<reference key="4">
    <citation type="journal article" date="2002" name="Genes Dev.">
        <title>Complex transcriptional circuitry at the G1/S transition in Saccharomyces cerevisiae.</title>
        <authorList>
            <person name="Horak C.E."/>
            <person name="Luscombe N.M."/>
            <person name="Qian J."/>
            <person name="Bertone P."/>
            <person name="Piccirrillo S."/>
            <person name="Gerstein M."/>
            <person name="Snyder M."/>
        </authorList>
    </citation>
    <scope>FUNCTION</scope>
    <scope>INDUCTION</scope>
</reference>
<reference key="5">
    <citation type="journal article" date="2003" name="Nature">
        <title>Targets of the cyclin-dependent kinase Cdk1.</title>
        <authorList>
            <person name="Ubersax J.A."/>
            <person name="Woodbury E.L."/>
            <person name="Quang P.N."/>
            <person name="Paraz M."/>
            <person name="Blethrow J.D."/>
            <person name="Shah K."/>
            <person name="Shokat K.M."/>
            <person name="Morgan D.O."/>
        </authorList>
    </citation>
    <scope>PHOSPHORYLATION BY CDC28</scope>
</reference>
<reference key="6">
    <citation type="journal article" date="2005" name="Genetics">
        <title>High functional overlap between MluI cell-cycle box binding factor and Swi4/6 cell-cycle box binding factor in the G1/S transcriptional program in Saccharomyces cerevisiae.</title>
        <authorList>
            <person name="Bean J.M."/>
            <person name="Siggia E.D."/>
            <person name="Cross F.R."/>
        </authorList>
    </citation>
    <scope>INDUCTION</scope>
</reference>
<reference key="7">
    <citation type="journal article" date="2007" name="Proc. Natl. Acad. Sci. U.S.A.">
        <title>Analysis of phosphorylation sites on proteins from Saccharomyces cerevisiae by electron transfer dissociation (ETD) mass spectrometry.</title>
        <authorList>
            <person name="Chi A."/>
            <person name="Huttenhower C."/>
            <person name="Geer L.Y."/>
            <person name="Coon J.J."/>
            <person name="Syka J.E.P."/>
            <person name="Bai D.L."/>
            <person name="Shabanowitz J."/>
            <person name="Burke D.J."/>
            <person name="Troyanskaya O.G."/>
            <person name="Hunt D.F."/>
        </authorList>
    </citation>
    <scope>PHOSPHORYLATION [LARGE SCALE ANALYSIS] AT SER-295</scope>
    <scope>IDENTIFICATION BY MASS SPECTROMETRY [LARGE SCALE ANALYSIS]</scope>
</reference>
<reference key="8">
    <citation type="journal article" date="2008" name="Mol. Cell. Proteomics">
        <title>A multidimensional chromatography technology for in-depth phosphoproteome analysis.</title>
        <authorList>
            <person name="Albuquerque C.P."/>
            <person name="Smolka M.B."/>
            <person name="Payne S.H."/>
            <person name="Bafna V."/>
            <person name="Eng J."/>
            <person name="Zhou H."/>
        </authorList>
    </citation>
    <scope>PHOSPHORYLATION [LARGE SCALE ANALYSIS] AT SER-281; SER-295; SER-302 AND SER-384</scope>
    <scope>IDENTIFICATION BY MASS SPECTROMETRY [LARGE SCALE ANALYSIS]</scope>
</reference>
<organism>
    <name type="scientific">Saccharomyces cerevisiae (strain ATCC 204508 / S288c)</name>
    <name type="common">Baker's yeast</name>
    <dbReference type="NCBI Taxonomy" id="559292"/>
    <lineage>
        <taxon>Eukaryota</taxon>
        <taxon>Fungi</taxon>
        <taxon>Dikarya</taxon>
        <taxon>Ascomycota</taxon>
        <taxon>Saccharomycotina</taxon>
        <taxon>Saccharomycetes</taxon>
        <taxon>Saccharomycetales</taxon>
        <taxon>Saccharomycetaceae</taxon>
        <taxon>Saccharomyces</taxon>
    </lineage>
</organism>
<accession>Q04383</accession>
<accession>D6VTC3</accession>
<keyword id="KW-0539">Nucleus</keyword>
<keyword id="KW-0597">Phosphoprotein</keyword>
<keyword id="KW-1185">Reference proteome</keyword>
<comment type="function">
    <text evidence="4">Binds to the promoters of genes with functions important for the G1/S (start) transition; primarily genes involved in DNA synthesis and repair, chromosome segregation, nuclear division and transcription.</text>
</comment>
<comment type="subcellular location">
    <subcellularLocation>
        <location evidence="7">Nucleus</location>
    </subcellularLocation>
</comment>
<comment type="induction">
    <text evidence="3 4 6">Regulated in a cell cycle-dependent manner, peaking in G1 phase. Negatively regulated by transcription factor SBF (SWI4-SWI6 cell-cycle box binding factor).</text>
</comment>
<comment type="PTM">
    <text evidence="5">Phosphorylated by CDC28.</text>
</comment>
<comment type="similarity">
    <text evidence="7">Belongs to the PLM2/TOS4 family.</text>
</comment>
<feature type="chain" id="PRO_0000262747" description="Protein PLM2">
    <location>
        <begin position="1"/>
        <end position="521"/>
    </location>
</feature>
<feature type="domain" description="FHA" evidence="1">
    <location>
        <begin position="102"/>
        <end position="156"/>
    </location>
</feature>
<feature type="region of interest" description="Disordered" evidence="2">
    <location>
        <begin position="1"/>
        <end position="63"/>
    </location>
</feature>
<feature type="compositionally biased region" description="Polar residues" evidence="2">
    <location>
        <begin position="51"/>
        <end position="63"/>
    </location>
</feature>
<feature type="modified residue" description="Phosphoserine" evidence="9">
    <location>
        <position position="281"/>
    </location>
</feature>
<feature type="modified residue" description="Phosphoserine" evidence="8 9">
    <location>
        <position position="295"/>
    </location>
</feature>
<feature type="modified residue" description="Phosphoserine" evidence="9">
    <location>
        <position position="302"/>
    </location>
</feature>
<feature type="modified residue" description="Phosphoserine" evidence="9">
    <location>
        <position position="384"/>
    </location>
</feature>
<protein>
    <recommendedName>
        <fullName>Protein PLM2</fullName>
    </recommendedName>
    <alternativeName>
        <fullName>Plasmid maintenance protein 2</fullName>
    </alternativeName>
</protein>
<sequence>MSHLFPPSSPVAGKPLESPQKEPGKLANTSVLTLGRKRYNYELEEYPTPDPSSSIGRQSSPVKDITSRLNETKSALSSPSKQEKVLAGPIEIELDASDPSRLAIGRKKSVCNIILPCRKNISRQHAFISYAADRNEIKLECNGTNGLSVHLPYSMQLHLVKPFPTRNFYKLVAEEPLTSQNTKQSHGKTLQKNQNFISFVLAKGETVTFPYIQGSFINFTGVTVCLSLKKVAPYPGDGNNNFDEENSTETEDELCLLTTTSDDFSWQKETPSMKFVPVEHSPRTEQISKPLLIASPALVKNSPISYRTTPQTSFVINQPSTPKKLKRKSISLKNNTIQETPLPKDKIIGTLSASTRSGGINEEESFAAVAKKTKELSSTTAIVSPAQKRLKTSLNIIPEISRSLSERGIRFDDLVHVLCNHLAFSNLQQTPLSQLQNINSNTSQLSKDELKKVLETISCIGIIVREGKDASGKPLEDEYYYDVENDDSDERKILYNSLKGRSRLRSCRKKHKQYFWKRPTK</sequence>
<gene>
    <name type="primary">PLM2</name>
    <name type="ordered locus">YDR501W</name>
</gene>
<evidence type="ECO:0000255" key="1">
    <source>
        <dbReference type="PROSITE-ProRule" id="PRU00086"/>
    </source>
</evidence>
<evidence type="ECO:0000256" key="2">
    <source>
        <dbReference type="SAM" id="MobiDB-lite"/>
    </source>
</evidence>
<evidence type="ECO:0000269" key="3">
    <source>
    </source>
</evidence>
<evidence type="ECO:0000269" key="4">
    <source>
    </source>
</evidence>
<evidence type="ECO:0000269" key="5">
    <source>
    </source>
</evidence>
<evidence type="ECO:0000269" key="6">
    <source>
    </source>
</evidence>
<evidence type="ECO:0000305" key="7"/>
<evidence type="ECO:0007744" key="8">
    <source>
    </source>
</evidence>
<evidence type="ECO:0007744" key="9">
    <source>
    </source>
</evidence>
<name>PLM2_YEAST</name>
<dbReference type="EMBL" id="U33057">
    <property type="protein sequence ID" value="AAB64943.1"/>
    <property type="molecule type" value="Genomic_DNA"/>
</dbReference>
<dbReference type="EMBL" id="BK006938">
    <property type="protein sequence ID" value="DAA12333.1"/>
    <property type="molecule type" value="Genomic_DNA"/>
</dbReference>
<dbReference type="PIR" id="S69559">
    <property type="entry name" value="S69559"/>
</dbReference>
<dbReference type="RefSeq" id="NP_010789.1">
    <property type="nucleotide sequence ID" value="NM_001180809.1"/>
</dbReference>
<dbReference type="BioGRID" id="32552">
    <property type="interactions" value="97"/>
</dbReference>
<dbReference type="DIP" id="DIP-8546N"/>
<dbReference type="FunCoup" id="Q04383">
    <property type="interactions" value="336"/>
</dbReference>
<dbReference type="IntAct" id="Q04383">
    <property type="interactions" value="31"/>
</dbReference>
<dbReference type="MINT" id="Q04383"/>
<dbReference type="STRING" id="4932.YDR501W"/>
<dbReference type="GlyGen" id="Q04383">
    <property type="glycosylation" value="1 site"/>
</dbReference>
<dbReference type="iPTMnet" id="Q04383"/>
<dbReference type="PaxDb" id="4932-YDR501W"/>
<dbReference type="PeptideAtlas" id="Q04383"/>
<dbReference type="EnsemblFungi" id="YDR501W_mRNA">
    <property type="protein sequence ID" value="YDR501W"/>
    <property type="gene ID" value="YDR501W"/>
</dbReference>
<dbReference type="GeneID" id="852112"/>
<dbReference type="KEGG" id="sce:YDR501W"/>
<dbReference type="AGR" id="SGD:S000002909"/>
<dbReference type="SGD" id="S000002909">
    <property type="gene designation" value="PLM2"/>
</dbReference>
<dbReference type="VEuPathDB" id="FungiDB:YDR501W"/>
<dbReference type="eggNOG" id="ENOG502RZJP">
    <property type="taxonomic scope" value="Eukaryota"/>
</dbReference>
<dbReference type="GeneTree" id="ENSGT00940000176669"/>
<dbReference type="HOGENOM" id="CLU_027153_0_0_1"/>
<dbReference type="InParanoid" id="Q04383"/>
<dbReference type="OMA" id="KCIGVIY"/>
<dbReference type="OrthoDB" id="5348546at2759"/>
<dbReference type="BioCyc" id="YEAST:G3O-30024-MONOMER"/>
<dbReference type="BioGRID-ORCS" id="852112">
    <property type="hits" value="0 hits in 10 CRISPR screens"/>
</dbReference>
<dbReference type="PRO" id="PR:Q04383"/>
<dbReference type="Proteomes" id="UP000002311">
    <property type="component" value="Chromosome IV"/>
</dbReference>
<dbReference type="RNAct" id="Q04383">
    <property type="molecule type" value="protein"/>
</dbReference>
<dbReference type="GO" id="GO:0000785">
    <property type="term" value="C:chromatin"/>
    <property type="evidence" value="ECO:0000314"/>
    <property type="project" value="SGD"/>
</dbReference>
<dbReference type="GO" id="GO:0005634">
    <property type="term" value="C:nucleus"/>
    <property type="evidence" value="ECO:0007669"/>
    <property type="project" value="UniProtKB-SubCell"/>
</dbReference>
<dbReference type="GO" id="GO:0003682">
    <property type="term" value="F:chromatin binding"/>
    <property type="evidence" value="ECO:0000314"/>
    <property type="project" value="SGD"/>
</dbReference>
<dbReference type="GO" id="GO:0006974">
    <property type="term" value="P:DNA damage response"/>
    <property type="evidence" value="ECO:0000316"/>
    <property type="project" value="SGD"/>
</dbReference>
<dbReference type="CDD" id="cd22699">
    <property type="entry name" value="FHA_PLM2-like"/>
    <property type="match status" value="1"/>
</dbReference>
<dbReference type="FunFam" id="2.60.200.20:FF:000130">
    <property type="entry name" value="Plm2p"/>
    <property type="match status" value="1"/>
</dbReference>
<dbReference type="Gene3D" id="2.60.200.20">
    <property type="match status" value="1"/>
</dbReference>
<dbReference type="InterPro" id="IPR000253">
    <property type="entry name" value="FHA_dom"/>
</dbReference>
<dbReference type="InterPro" id="IPR008984">
    <property type="entry name" value="SMAD_FHA_dom_sf"/>
</dbReference>
<dbReference type="Pfam" id="PF00498">
    <property type="entry name" value="FHA"/>
    <property type="match status" value="1"/>
</dbReference>
<dbReference type="SMART" id="SM00240">
    <property type="entry name" value="FHA"/>
    <property type="match status" value="1"/>
</dbReference>
<dbReference type="SUPFAM" id="SSF49879">
    <property type="entry name" value="SMAD/FHA domain"/>
    <property type="match status" value="1"/>
</dbReference>
<dbReference type="PROSITE" id="PS50006">
    <property type="entry name" value="FHA_DOMAIN"/>
    <property type="match status" value="1"/>
</dbReference>